<dbReference type="EC" id="5.4.3.8" evidence="1"/>
<dbReference type="EMBL" id="CP000113">
    <property type="protein sequence ID" value="ABF88666.1"/>
    <property type="molecule type" value="Genomic_DNA"/>
</dbReference>
<dbReference type="RefSeq" id="WP_011550530.1">
    <property type="nucleotide sequence ID" value="NC_008095.1"/>
</dbReference>
<dbReference type="SMR" id="Q1DFA7"/>
<dbReference type="STRING" id="246197.MXAN_0395"/>
<dbReference type="EnsemblBacteria" id="ABF88666">
    <property type="protein sequence ID" value="ABF88666"/>
    <property type="gene ID" value="MXAN_0395"/>
</dbReference>
<dbReference type="GeneID" id="41357890"/>
<dbReference type="KEGG" id="mxa:MXAN_0395"/>
<dbReference type="eggNOG" id="COG0001">
    <property type="taxonomic scope" value="Bacteria"/>
</dbReference>
<dbReference type="HOGENOM" id="CLU_016922_1_5_7"/>
<dbReference type="OrthoDB" id="9801834at2"/>
<dbReference type="UniPathway" id="UPA00251">
    <property type="reaction ID" value="UER00317"/>
</dbReference>
<dbReference type="Proteomes" id="UP000002402">
    <property type="component" value="Chromosome"/>
</dbReference>
<dbReference type="GO" id="GO:0005737">
    <property type="term" value="C:cytoplasm"/>
    <property type="evidence" value="ECO:0007669"/>
    <property type="project" value="UniProtKB-SubCell"/>
</dbReference>
<dbReference type="GO" id="GO:0042286">
    <property type="term" value="F:glutamate-1-semialdehyde 2,1-aminomutase activity"/>
    <property type="evidence" value="ECO:0007669"/>
    <property type="project" value="UniProtKB-UniRule"/>
</dbReference>
<dbReference type="GO" id="GO:0030170">
    <property type="term" value="F:pyridoxal phosphate binding"/>
    <property type="evidence" value="ECO:0007669"/>
    <property type="project" value="InterPro"/>
</dbReference>
<dbReference type="GO" id="GO:0008483">
    <property type="term" value="F:transaminase activity"/>
    <property type="evidence" value="ECO:0007669"/>
    <property type="project" value="InterPro"/>
</dbReference>
<dbReference type="GO" id="GO:0006782">
    <property type="term" value="P:protoporphyrinogen IX biosynthetic process"/>
    <property type="evidence" value="ECO:0007669"/>
    <property type="project" value="UniProtKB-UniRule"/>
</dbReference>
<dbReference type="CDD" id="cd00610">
    <property type="entry name" value="OAT_like"/>
    <property type="match status" value="1"/>
</dbReference>
<dbReference type="FunFam" id="3.40.640.10:FF:000021">
    <property type="entry name" value="Glutamate-1-semialdehyde 2,1-aminomutase"/>
    <property type="match status" value="1"/>
</dbReference>
<dbReference type="Gene3D" id="3.90.1150.10">
    <property type="entry name" value="Aspartate Aminotransferase, domain 1"/>
    <property type="match status" value="1"/>
</dbReference>
<dbReference type="Gene3D" id="3.40.640.10">
    <property type="entry name" value="Type I PLP-dependent aspartate aminotransferase-like (Major domain)"/>
    <property type="match status" value="1"/>
</dbReference>
<dbReference type="HAMAP" id="MF_00375">
    <property type="entry name" value="HemL_aminotrans_3"/>
    <property type="match status" value="1"/>
</dbReference>
<dbReference type="InterPro" id="IPR004639">
    <property type="entry name" value="4pyrrol_synth_GluAld_NH2Trfase"/>
</dbReference>
<dbReference type="InterPro" id="IPR005814">
    <property type="entry name" value="Aminotrans_3"/>
</dbReference>
<dbReference type="InterPro" id="IPR049704">
    <property type="entry name" value="Aminotrans_3_PPA_site"/>
</dbReference>
<dbReference type="InterPro" id="IPR015424">
    <property type="entry name" value="PyrdxlP-dep_Trfase"/>
</dbReference>
<dbReference type="InterPro" id="IPR015421">
    <property type="entry name" value="PyrdxlP-dep_Trfase_major"/>
</dbReference>
<dbReference type="InterPro" id="IPR015422">
    <property type="entry name" value="PyrdxlP-dep_Trfase_small"/>
</dbReference>
<dbReference type="NCBIfam" id="TIGR00713">
    <property type="entry name" value="hemL"/>
    <property type="match status" value="1"/>
</dbReference>
<dbReference type="NCBIfam" id="NF000818">
    <property type="entry name" value="PRK00062.1"/>
    <property type="match status" value="1"/>
</dbReference>
<dbReference type="PANTHER" id="PTHR43713">
    <property type="entry name" value="GLUTAMATE-1-SEMIALDEHYDE 2,1-AMINOMUTASE"/>
    <property type="match status" value="1"/>
</dbReference>
<dbReference type="PANTHER" id="PTHR43713:SF3">
    <property type="entry name" value="GLUTAMATE-1-SEMIALDEHYDE 2,1-AMINOMUTASE 1, CHLOROPLASTIC-RELATED"/>
    <property type="match status" value="1"/>
</dbReference>
<dbReference type="Pfam" id="PF00202">
    <property type="entry name" value="Aminotran_3"/>
    <property type="match status" value="1"/>
</dbReference>
<dbReference type="SUPFAM" id="SSF53383">
    <property type="entry name" value="PLP-dependent transferases"/>
    <property type="match status" value="1"/>
</dbReference>
<dbReference type="PROSITE" id="PS00600">
    <property type="entry name" value="AA_TRANSFER_CLASS_3"/>
    <property type="match status" value="1"/>
</dbReference>
<comment type="catalytic activity">
    <reaction evidence="1">
        <text>(S)-4-amino-5-oxopentanoate = 5-aminolevulinate</text>
        <dbReference type="Rhea" id="RHEA:14265"/>
        <dbReference type="ChEBI" id="CHEBI:57501"/>
        <dbReference type="ChEBI" id="CHEBI:356416"/>
        <dbReference type="EC" id="5.4.3.8"/>
    </reaction>
</comment>
<comment type="cofactor">
    <cofactor evidence="1">
        <name>pyridoxal 5'-phosphate</name>
        <dbReference type="ChEBI" id="CHEBI:597326"/>
    </cofactor>
</comment>
<comment type="pathway">
    <text evidence="1">Porphyrin-containing compound metabolism; protoporphyrin-IX biosynthesis; 5-aminolevulinate from L-glutamyl-tRNA(Glu): step 2/2.</text>
</comment>
<comment type="subunit">
    <text evidence="1">Homodimer.</text>
</comment>
<comment type="subcellular location">
    <subcellularLocation>
        <location evidence="1">Cytoplasm</location>
    </subcellularLocation>
</comment>
<comment type="similarity">
    <text evidence="1">Belongs to the class-III pyridoxal-phosphate-dependent aminotransferase family. HemL subfamily.</text>
</comment>
<sequence length="431" mass="45136">MNHAHSQALFARAQARIPGGVNSPVRAFRGVGGDPVFFREGAGAWLTDVDGNRYVDLVGSWGPLILGHAYPPILDAIIDAARRGSSYGAPHADEVEFAELICATMPAVEMVRLVSSGTEATVAAIRVARGFTGREHILKFEGCFHGAGDPFLVKAGSGVETLGLPDSPGVPSALAKLTLTAPFNDLAAVERIFAENGQDIACAIIEPVVGNMGVLVPKPGYLEGLQALCQKHGVLLVLDEVMTGFRLSRGGAQELYGLKPDLTTMAKVIGGGMPMGAYGGRRDIMEKVAPAGPVYQSGTLSGNPVAVAAGLACLKALAAPGTYARLEEVSRMLEVGLLAEAKAADVPVTVNRVGSMLTVFFTGEPVYDYTSAKKADTARFGKFFHAMLNESVYLPPSQFEAAFVSLAIGEPEVAHVLAAARKAFRSLGKTG</sequence>
<proteinExistence type="inferred from homology"/>
<gene>
    <name evidence="1" type="primary">hemL</name>
    <name type="ordered locus">MXAN_0395</name>
</gene>
<protein>
    <recommendedName>
        <fullName evidence="1">Glutamate-1-semialdehyde 2,1-aminomutase</fullName>
        <shortName evidence="1">GSA</shortName>
        <ecNumber evidence="1">5.4.3.8</ecNumber>
    </recommendedName>
    <alternativeName>
        <fullName evidence="1">Glutamate-1-semialdehyde aminotransferase</fullName>
        <shortName evidence="1">GSA-AT</shortName>
    </alternativeName>
</protein>
<name>GSA_MYXXD</name>
<evidence type="ECO:0000255" key="1">
    <source>
        <dbReference type="HAMAP-Rule" id="MF_00375"/>
    </source>
</evidence>
<organism>
    <name type="scientific">Myxococcus xanthus (strain DK1622)</name>
    <dbReference type="NCBI Taxonomy" id="246197"/>
    <lineage>
        <taxon>Bacteria</taxon>
        <taxon>Pseudomonadati</taxon>
        <taxon>Myxococcota</taxon>
        <taxon>Myxococcia</taxon>
        <taxon>Myxococcales</taxon>
        <taxon>Cystobacterineae</taxon>
        <taxon>Myxococcaceae</taxon>
        <taxon>Myxococcus</taxon>
    </lineage>
</organism>
<reference key="1">
    <citation type="journal article" date="2006" name="Proc. Natl. Acad. Sci. U.S.A.">
        <title>Evolution of sensory complexity recorded in a myxobacterial genome.</title>
        <authorList>
            <person name="Goldman B.S."/>
            <person name="Nierman W.C."/>
            <person name="Kaiser D."/>
            <person name="Slater S.C."/>
            <person name="Durkin A.S."/>
            <person name="Eisen J.A."/>
            <person name="Ronning C.M."/>
            <person name="Barbazuk W.B."/>
            <person name="Blanchard M."/>
            <person name="Field C."/>
            <person name="Halling C."/>
            <person name="Hinkle G."/>
            <person name="Iartchuk O."/>
            <person name="Kim H.S."/>
            <person name="Mackenzie C."/>
            <person name="Madupu R."/>
            <person name="Miller N."/>
            <person name="Shvartsbeyn A."/>
            <person name="Sullivan S.A."/>
            <person name="Vaudin M."/>
            <person name="Wiegand R."/>
            <person name="Kaplan H.B."/>
        </authorList>
    </citation>
    <scope>NUCLEOTIDE SEQUENCE [LARGE SCALE GENOMIC DNA]</scope>
    <source>
        <strain>DK1622</strain>
    </source>
</reference>
<keyword id="KW-0963">Cytoplasm</keyword>
<keyword id="KW-0413">Isomerase</keyword>
<keyword id="KW-0627">Porphyrin biosynthesis</keyword>
<keyword id="KW-0663">Pyridoxal phosphate</keyword>
<keyword id="KW-1185">Reference proteome</keyword>
<feature type="chain" id="PRO_0000300928" description="Glutamate-1-semialdehyde 2,1-aminomutase">
    <location>
        <begin position="1"/>
        <end position="431"/>
    </location>
</feature>
<feature type="modified residue" description="N6-(pyridoxal phosphate)lysine" evidence="1">
    <location>
        <position position="267"/>
    </location>
</feature>
<accession>Q1DFA7</accession>